<reference key="1">
    <citation type="journal article" date="1990" name="Mol. Gen. Genet.">
        <title>The nifEN genes participating in FeMo cofactor biosynthesis and genes encoding dinitrogenase are part of the same operon in Bradyrhizobium species.</title>
        <authorList>
            <person name="Aguilar O.M."/>
            <person name="Taormino J."/>
            <person name="Thoeny B."/>
            <person name="Ramseier T."/>
            <person name="Hennecke H."/>
            <person name="Szalay A.A."/>
        </authorList>
    </citation>
    <scope>NUCLEOTIDE SEQUENCE [GENOMIC DNA]</scope>
    <source>
        <strain>JCM 10833 / BCRC 13528 / IAM 13628 / NBRC 14792 / USDA 110</strain>
    </source>
</reference>
<reference key="2">
    <citation type="journal article" date="2001" name="J. Bacteriol.">
        <title>Potential symbiosis-specific genes uncovered by sequencing a 410-kb DNA region of the Bradyrhizobium japonicum chromosome.</title>
        <authorList>
            <person name="Goettfert M."/>
            <person name="Roethlisberger S."/>
            <person name="Kuendig C."/>
            <person name="Beck C."/>
            <person name="Marty R."/>
            <person name="Hennecke H."/>
        </authorList>
    </citation>
    <scope>NUCLEOTIDE SEQUENCE [GENOMIC DNA]</scope>
    <source>
        <strain>USDA 110spc4</strain>
    </source>
</reference>
<reference key="3">
    <citation type="journal article" date="2002" name="DNA Res.">
        <title>Complete genomic sequence of nitrogen-fixing symbiotic bacterium Bradyrhizobium japonicum USDA110.</title>
        <authorList>
            <person name="Kaneko T."/>
            <person name="Nakamura Y."/>
            <person name="Sato S."/>
            <person name="Minamisawa K."/>
            <person name="Uchiumi T."/>
            <person name="Sasamoto S."/>
            <person name="Watanabe A."/>
            <person name="Idesawa K."/>
            <person name="Iriguchi M."/>
            <person name="Kawashima K."/>
            <person name="Kohara M."/>
            <person name="Matsumoto M."/>
            <person name="Shimpo S."/>
            <person name="Tsuruoka H."/>
            <person name="Wada T."/>
            <person name="Yamada M."/>
            <person name="Tabata S."/>
        </authorList>
    </citation>
    <scope>NUCLEOTIDE SEQUENCE [LARGE SCALE GENOMIC DNA]</scope>
    <source>
        <strain>JCM 10833 / BCRC 13528 / IAM 13628 / NBRC 14792 / USDA 110</strain>
    </source>
</reference>
<organism>
    <name type="scientific">Bradyrhizobium diazoefficiens (strain JCM 10833 / BCRC 13528 / IAM 13628 / NBRC 14792 / USDA 110)</name>
    <dbReference type="NCBI Taxonomy" id="224911"/>
    <lineage>
        <taxon>Bacteria</taxon>
        <taxon>Pseudomonadati</taxon>
        <taxon>Pseudomonadota</taxon>
        <taxon>Alphaproteobacteria</taxon>
        <taxon>Hyphomicrobiales</taxon>
        <taxon>Nitrobacteraceae</taxon>
        <taxon>Bradyrhizobium</taxon>
    </lineage>
</organism>
<comment type="function">
    <text>This protein may play a role in the biosynthesis of the prosthetic group of nitrogenase (FeMo cofactor).</text>
</comment>
<comment type="pathway">
    <text>Cofactor biosynthesis; Fe-Mo cofactor biosynthesis.</text>
</comment>
<comment type="similarity">
    <text evidence="1">Belongs to the NifD/NifK/NifE/NifN family.</text>
</comment>
<accession>P26506</accession>
<accession>Q9ANN3</accession>
<evidence type="ECO:0000305" key="1"/>
<sequence>MSSLAATVQDIFDEPGCAKNGSKSEAERRNGCTRQLQPGSAAGGCAFDGAKVALQPFTDVAHLVHGPIACEGNSWDNRGAASSGSDLWRTAFTTDLSETDIVFGGEKRLCKAIKEIIDKCDPPAIFVYQTCIPAMIGDDINAVCKAASRRFSKPVIPINSPGFAGSKNLGNKLAGEALLDYVIGTREPDYTTPYDINLIGEYNLSGELWQVKPVLDELGVRILCCISGDGKYREVASSHRARAAMLVCSKSMINVARKMEQRYGIPFFEGSFYGIQDSSESLRQIARLLVERGAPADLLGRTEAVIAREEARAWAAIQPYKPRLEGKRALLMTGGVKSWSVVSALQEAGLELVGTSVKKSTMEDKERIKELMGQDAHMIDDMTAREMYKMLKDAEADIMLSGGKSQFVALKAAVPWVDINQERCHAYMGYAGIVKLVEEIDNSLSSPMWEQLRRPAPWEALAKAREQMQSMAAIAGDPVLAETARRARNICVCNRVDLGTIEDAISVHGLRSVAAVREHTNAAGGCCQGRIEDMLMSEPSDMRQAAE</sequence>
<protein>
    <recommendedName>
        <fullName>Nitrogenase iron-molybdenum cofactor biosynthesis protein NifE</fullName>
    </recommendedName>
</protein>
<gene>
    <name type="primary">nifE</name>
    <name type="ordered locus">blr1745</name>
</gene>
<dbReference type="EMBL" id="X56894">
    <property type="protein sequence ID" value="CAA40213.1"/>
    <property type="molecule type" value="Genomic_DNA"/>
</dbReference>
<dbReference type="EMBL" id="AH010242">
    <property type="protein sequence ID" value="AAG60731.1"/>
    <property type="molecule type" value="Genomic_DNA"/>
</dbReference>
<dbReference type="EMBL" id="BA000040">
    <property type="protein sequence ID" value="BAC47010.1"/>
    <property type="molecule type" value="Genomic_DNA"/>
</dbReference>
<dbReference type="PIR" id="S12263">
    <property type="entry name" value="NIZJME"/>
</dbReference>
<dbReference type="RefSeq" id="NP_768385.1">
    <property type="nucleotide sequence ID" value="NC_004463.1"/>
</dbReference>
<dbReference type="RefSeq" id="WP_011084554.1">
    <property type="nucleotide sequence ID" value="NZ_CP011360.1"/>
</dbReference>
<dbReference type="SMR" id="P26506"/>
<dbReference type="STRING" id="224911.AAV28_05655"/>
<dbReference type="EnsemblBacteria" id="BAC47010">
    <property type="protein sequence ID" value="BAC47010"/>
    <property type="gene ID" value="BAC47010"/>
</dbReference>
<dbReference type="GeneID" id="92969972"/>
<dbReference type="KEGG" id="bja:blr1745"/>
<dbReference type="PATRIC" id="fig|224911.44.peg.1210"/>
<dbReference type="eggNOG" id="COG2710">
    <property type="taxonomic scope" value="Bacteria"/>
</dbReference>
<dbReference type="HOGENOM" id="CLU_025876_1_1_5"/>
<dbReference type="InParanoid" id="P26506"/>
<dbReference type="OrthoDB" id="9762718at2"/>
<dbReference type="PhylomeDB" id="P26506"/>
<dbReference type="UniPathway" id="UPA00782"/>
<dbReference type="Proteomes" id="UP000002526">
    <property type="component" value="Chromosome"/>
</dbReference>
<dbReference type="GO" id="GO:0016163">
    <property type="term" value="F:nitrogenase activity"/>
    <property type="evidence" value="ECO:0007669"/>
    <property type="project" value="InterPro"/>
</dbReference>
<dbReference type="GO" id="GO:0009399">
    <property type="term" value="P:nitrogen fixation"/>
    <property type="evidence" value="ECO:0007669"/>
    <property type="project" value="UniProtKB-KW"/>
</dbReference>
<dbReference type="GO" id="GO:0065003">
    <property type="term" value="P:protein-containing complex assembly"/>
    <property type="evidence" value="ECO:0007669"/>
    <property type="project" value="InterPro"/>
</dbReference>
<dbReference type="CDD" id="cd01968">
    <property type="entry name" value="Nitrogenase_NifE_I"/>
    <property type="match status" value="1"/>
</dbReference>
<dbReference type="FunFam" id="3.40.50.1980:FF:000033">
    <property type="entry name" value="Nitrogenase MoFe cofactor biosynthesis protein NifE"/>
    <property type="match status" value="1"/>
</dbReference>
<dbReference type="Gene3D" id="1.10.10.1100">
    <property type="entry name" value="BFD-like [2Fe-2S]-binding domain"/>
    <property type="match status" value="1"/>
</dbReference>
<dbReference type="Gene3D" id="3.40.50.12380">
    <property type="entry name" value="Nitrogenase MoFe cofactor biosynthesis protein NifE, C-terminal"/>
    <property type="match status" value="1"/>
</dbReference>
<dbReference type="Gene3D" id="3.40.50.1980">
    <property type="entry name" value="Nitrogenase molybdenum iron protein domain"/>
    <property type="match status" value="1"/>
</dbReference>
<dbReference type="InterPro" id="IPR007419">
    <property type="entry name" value="BFD-like_2Fe2S-bd_dom"/>
</dbReference>
<dbReference type="InterPro" id="IPR041854">
    <property type="entry name" value="BFD-like_2Fe2S-bd_dom_sf"/>
</dbReference>
<dbReference type="InterPro" id="IPR000510">
    <property type="entry name" value="Nase/OxRdtase_comp1"/>
</dbReference>
<dbReference type="InterPro" id="IPR000318">
    <property type="entry name" value="Nase_comp1_CS"/>
</dbReference>
<dbReference type="InterPro" id="IPR005973">
    <property type="entry name" value="NifE"/>
</dbReference>
<dbReference type="InterPro" id="IPR049939">
    <property type="entry name" value="NifE-like"/>
</dbReference>
<dbReference type="NCBIfam" id="TIGR01283">
    <property type="entry name" value="nifE"/>
    <property type="match status" value="1"/>
</dbReference>
<dbReference type="PANTHER" id="PTHR42956">
    <property type="entry name" value="NITROGENASE IRON-MOLYBDENUM COFACTOR BIOSYNTHESIS PROTEIN NIFE"/>
    <property type="match status" value="1"/>
</dbReference>
<dbReference type="PANTHER" id="PTHR42956:SF1">
    <property type="entry name" value="NITROGENASE IRON-MOLYBDENUM COFACTOR BIOSYNTHESIS PROTEIN NIFE"/>
    <property type="match status" value="1"/>
</dbReference>
<dbReference type="Pfam" id="PF04324">
    <property type="entry name" value="Fer2_BFD"/>
    <property type="match status" value="1"/>
</dbReference>
<dbReference type="Pfam" id="PF00148">
    <property type="entry name" value="Oxidored_nitro"/>
    <property type="match status" value="1"/>
</dbReference>
<dbReference type="SUPFAM" id="SSF53807">
    <property type="entry name" value="Helical backbone' metal receptor"/>
    <property type="match status" value="1"/>
</dbReference>
<dbReference type="PROSITE" id="PS00699">
    <property type="entry name" value="NITROGENASE_1_1"/>
    <property type="match status" value="1"/>
</dbReference>
<dbReference type="PROSITE" id="PS00090">
    <property type="entry name" value="NITROGENASE_1_2"/>
    <property type="match status" value="1"/>
</dbReference>
<name>NIFE_BRADU</name>
<proteinExistence type="inferred from homology"/>
<feature type="chain" id="PRO_0000153113" description="Nitrogenase iron-molybdenum cofactor biosynthesis protein NifE">
    <location>
        <begin position="1"/>
        <end position="547"/>
    </location>
</feature>
<feature type="sequence conflict" description="In Ref. 1; CAA40213." evidence="1" ref="1">
    <original>T</original>
    <variation>N</variation>
    <location>
        <position position="58"/>
    </location>
</feature>
<feature type="sequence conflict" description="In Ref. 1; CAA40213." evidence="1" ref="1">
    <original>G</original>
    <variation>A</variation>
    <location>
        <position position="79"/>
    </location>
</feature>
<keyword id="KW-0535">Nitrogen fixation</keyword>
<keyword id="KW-1185">Reference proteome</keyword>